<dbReference type="EC" id="7.1.1.-"/>
<dbReference type="EMBL" id="AP008956">
    <property type="protein sequence ID" value="BAE97252.1"/>
    <property type="molecule type" value="Genomic_DNA"/>
</dbReference>
<dbReference type="RefSeq" id="YP_665604.1">
    <property type="nucleotide sequence ID" value="NC_008235.1"/>
</dbReference>
<dbReference type="SMR" id="Q14FB0"/>
<dbReference type="GeneID" id="4178232"/>
<dbReference type="KEGG" id="palz:4178232"/>
<dbReference type="OrthoDB" id="23453at3646"/>
<dbReference type="GO" id="GO:0009535">
    <property type="term" value="C:chloroplast thylakoid membrane"/>
    <property type="evidence" value="ECO:0007669"/>
    <property type="project" value="UniProtKB-SubCell"/>
</dbReference>
<dbReference type="GO" id="GO:0008137">
    <property type="term" value="F:NADH dehydrogenase (ubiquinone) activity"/>
    <property type="evidence" value="ECO:0007669"/>
    <property type="project" value="InterPro"/>
</dbReference>
<dbReference type="GO" id="GO:0048038">
    <property type="term" value="F:quinone binding"/>
    <property type="evidence" value="ECO:0007669"/>
    <property type="project" value="UniProtKB-KW"/>
</dbReference>
<dbReference type="GO" id="GO:0042773">
    <property type="term" value="P:ATP synthesis coupled electron transport"/>
    <property type="evidence" value="ECO:0007669"/>
    <property type="project" value="InterPro"/>
</dbReference>
<dbReference type="GO" id="GO:0015990">
    <property type="term" value="P:electron transport coupled proton transport"/>
    <property type="evidence" value="ECO:0007669"/>
    <property type="project" value="TreeGrafter"/>
</dbReference>
<dbReference type="Gene3D" id="1.20.5.2700">
    <property type="match status" value="1"/>
</dbReference>
<dbReference type="InterPro" id="IPR002128">
    <property type="entry name" value="NADH_UbQ_OxRdtase_chlpt_su5_C"/>
</dbReference>
<dbReference type="InterPro" id="IPR018393">
    <property type="entry name" value="NADHpl_OxRdtase_5_subgr"/>
</dbReference>
<dbReference type="InterPro" id="IPR001750">
    <property type="entry name" value="ND/Mrp_TM"/>
</dbReference>
<dbReference type="InterPro" id="IPR003945">
    <property type="entry name" value="NU5C-like"/>
</dbReference>
<dbReference type="InterPro" id="IPR001516">
    <property type="entry name" value="Proton_antipo_N"/>
</dbReference>
<dbReference type="NCBIfam" id="TIGR01974">
    <property type="entry name" value="NDH_I_L"/>
    <property type="match status" value="1"/>
</dbReference>
<dbReference type="NCBIfam" id="NF005141">
    <property type="entry name" value="PRK06590.1"/>
    <property type="match status" value="1"/>
</dbReference>
<dbReference type="PANTHER" id="PTHR42829">
    <property type="entry name" value="NADH-UBIQUINONE OXIDOREDUCTASE CHAIN 5"/>
    <property type="match status" value="1"/>
</dbReference>
<dbReference type="PANTHER" id="PTHR42829:SF2">
    <property type="entry name" value="NADH-UBIQUINONE OXIDOREDUCTASE CHAIN 5"/>
    <property type="match status" value="1"/>
</dbReference>
<dbReference type="Pfam" id="PF01010">
    <property type="entry name" value="Proton_antipo_C"/>
    <property type="match status" value="1"/>
</dbReference>
<dbReference type="Pfam" id="PF00361">
    <property type="entry name" value="Proton_antipo_M"/>
    <property type="match status" value="1"/>
</dbReference>
<dbReference type="Pfam" id="PF00662">
    <property type="entry name" value="Proton_antipo_N"/>
    <property type="match status" value="1"/>
</dbReference>
<dbReference type="PRINTS" id="PR01434">
    <property type="entry name" value="NADHDHGNASE5"/>
</dbReference>
<dbReference type="PRINTS" id="PR01435">
    <property type="entry name" value="NPOXDRDTASE5"/>
</dbReference>
<keyword id="KW-0150">Chloroplast</keyword>
<keyword id="KW-0472">Membrane</keyword>
<keyword id="KW-0520">NAD</keyword>
<keyword id="KW-0521">NADP</keyword>
<keyword id="KW-0934">Plastid</keyword>
<keyword id="KW-0618">Plastoquinone</keyword>
<keyword id="KW-0874">Quinone</keyword>
<keyword id="KW-0793">Thylakoid</keyword>
<keyword id="KW-1278">Translocase</keyword>
<keyword id="KW-0812">Transmembrane</keyword>
<keyword id="KW-1133">Transmembrane helix</keyword>
<keyword id="KW-0813">Transport</keyword>
<geneLocation type="chloroplast"/>
<accession>Q14FB0</accession>
<proteinExistence type="inferred from homology"/>
<reference key="1">
    <citation type="submission" date="2005-03" db="EMBL/GenBank/DDBJ databases">
        <title>Complete structure of the chloroplast genome of Populus alba.</title>
        <authorList>
            <person name="Okumura S."/>
            <person name="Yamashita A."/>
            <person name="Kanamoto H."/>
            <person name="Hattori M."/>
            <person name="Takase H."/>
            <person name="Tomizawa K."/>
        </authorList>
    </citation>
    <scope>NUCLEOTIDE SEQUENCE [LARGE SCALE GENOMIC DNA]</scope>
</reference>
<gene>
    <name type="primary">ndhF</name>
</gene>
<organism>
    <name type="scientific">Populus alba</name>
    <name type="common">White poplar</name>
    <dbReference type="NCBI Taxonomy" id="43335"/>
    <lineage>
        <taxon>Eukaryota</taxon>
        <taxon>Viridiplantae</taxon>
        <taxon>Streptophyta</taxon>
        <taxon>Embryophyta</taxon>
        <taxon>Tracheophyta</taxon>
        <taxon>Spermatophyta</taxon>
        <taxon>Magnoliopsida</taxon>
        <taxon>eudicotyledons</taxon>
        <taxon>Gunneridae</taxon>
        <taxon>Pentapetalae</taxon>
        <taxon>rosids</taxon>
        <taxon>fabids</taxon>
        <taxon>Malpighiales</taxon>
        <taxon>Salicaceae</taxon>
        <taxon>Saliceae</taxon>
        <taxon>Populus</taxon>
    </lineage>
</organism>
<feature type="chain" id="PRO_0000360968" description="NAD(P)H-quinone oxidoreductase subunit 5, chloroplastic">
    <location>
        <begin position="1"/>
        <end position="760"/>
    </location>
</feature>
<feature type="transmembrane region" description="Helical" evidence="2">
    <location>
        <begin position="9"/>
        <end position="29"/>
    </location>
</feature>
<feature type="transmembrane region" description="Helical" evidence="2">
    <location>
        <begin position="39"/>
        <end position="59"/>
    </location>
</feature>
<feature type="transmembrane region" description="Helical" evidence="2">
    <location>
        <begin position="89"/>
        <end position="109"/>
    </location>
</feature>
<feature type="transmembrane region" description="Helical" evidence="2">
    <location>
        <begin position="125"/>
        <end position="145"/>
    </location>
</feature>
<feature type="transmembrane region" description="Helical" evidence="2">
    <location>
        <begin position="147"/>
        <end position="167"/>
    </location>
</feature>
<feature type="transmembrane region" description="Helical" evidence="2">
    <location>
        <begin position="185"/>
        <end position="205"/>
    </location>
</feature>
<feature type="transmembrane region" description="Helical" evidence="2">
    <location>
        <begin position="221"/>
        <end position="241"/>
    </location>
</feature>
<feature type="transmembrane region" description="Helical" evidence="2">
    <location>
        <begin position="260"/>
        <end position="280"/>
    </location>
</feature>
<feature type="transmembrane region" description="Helical" evidence="2">
    <location>
        <begin position="282"/>
        <end position="302"/>
    </location>
</feature>
<feature type="transmembrane region" description="Helical" evidence="2">
    <location>
        <begin position="329"/>
        <end position="349"/>
    </location>
</feature>
<feature type="transmembrane region" description="Helical" evidence="2">
    <location>
        <begin position="356"/>
        <end position="376"/>
    </location>
</feature>
<feature type="transmembrane region" description="Helical" evidence="2">
    <location>
        <begin position="398"/>
        <end position="418"/>
    </location>
</feature>
<feature type="transmembrane region" description="Helical" evidence="2">
    <location>
        <begin position="429"/>
        <end position="449"/>
    </location>
</feature>
<feature type="transmembrane region" description="Helical" evidence="2">
    <location>
        <begin position="556"/>
        <end position="576"/>
    </location>
</feature>
<feature type="transmembrane region" description="Helical" evidence="2">
    <location>
        <begin position="620"/>
        <end position="640"/>
    </location>
</feature>
<feature type="transmembrane region" description="Helical" evidence="2">
    <location>
        <begin position="734"/>
        <end position="754"/>
    </location>
</feature>
<name>NU5C_POPAL</name>
<comment type="function">
    <text evidence="1">NDH shuttles electrons from NAD(P)H:plastoquinone, via FMN and iron-sulfur (Fe-S) centers, to quinones in the photosynthetic chain and possibly in a chloroplast respiratory chain. The immediate electron acceptor for the enzyme in this species is believed to be plastoquinone. Couples the redox reaction to proton translocation, and thus conserves the redox energy in a proton gradient (By similarity).</text>
</comment>
<comment type="catalytic activity">
    <reaction>
        <text>a plastoquinone + NADH + (n+1) H(+)(in) = a plastoquinol + NAD(+) + n H(+)(out)</text>
        <dbReference type="Rhea" id="RHEA:42608"/>
        <dbReference type="Rhea" id="RHEA-COMP:9561"/>
        <dbReference type="Rhea" id="RHEA-COMP:9562"/>
        <dbReference type="ChEBI" id="CHEBI:15378"/>
        <dbReference type="ChEBI" id="CHEBI:17757"/>
        <dbReference type="ChEBI" id="CHEBI:57540"/>
        <dbReference type="ChEBI" id="CHEBI:57945"/>
        <dbReference type="ChEBI" id="CHEBI:62192"/>
    </reaction>
</comment>
<comment type="catalytic activity">
    <reaction>
        <text>a plastoquinone + NADPH + (n+1) H(+)(in) = a plastoquinol + NADP(+) + n H(+)(out)</text>
        <dbReference type="Rhea" id="RHEA:42612"/>
        <dbReference type="Rhea" id="RHEA-COMP:9561"/>
        <dbReference type="Rhea" id="RHEA-COMP:9562"/>
        <dbReference type="ChEBI" id="CHEBI:15378"/>
        <dbReference type="ChEBI" id="CHEBI:17757"/>
        <dbReference type="ChEBI" id="CHEBI:57783"/>
        <dbReference type="ChEBI" id="CHEBI:58349"/>
        <dbReference type="ChEBI" id="CHEBI:62192"/>
    </reaction>
</comment>
<comment type="subunit">
    <text evidence="1">NDH is composed of at least 16 different subunits, 5 of which are encoded in the nucleus.</text>
</comment>
<comment type="subcellular location">
    <subcellularLocation>
        <location evidence="1">Plastid</location>
        <location evidence="1">Chloroplast thylakoid membrane</location>
        <topology evidence="1">Multi-pass membrane protein</topology>
    </subcellularLocation>
</comment>
<comment type="similarity">
    <text evidence="3">Belongs to the complex I subunit 5 family.</text>
</comment>
<evidence type="ECO:0000250" key="1"/>
<evidence type="ECO:0000255" key="2"/>
<evidence type="ECO:0000305" key="3"/>
<protein>
    <recommendedName>
        <fullName>NAD(P)H-quinone oxidoreductase subunit 5, chloroplastic</fullName>
        <ecNumber>7.1.1.-</ecNumber>
    </recommendedName>
    <alternativeName>
        <fullName>NAD(P)H dehydrogenase subunit 5</fullName>
    </alternativeName>
    <alternativeName>
        <fullName>NADH-plastoquinone oxidoreductase subunit 5</fullName>
    </alternativeName>
</protein>
<sequence>MEHTYQYLWIISFVTLPVPMLIGMGLLLFPVSTKKLHRIWAFPSVLLLSIVMVFSTDLFIQQINSSSIYQYVWSWTINNDFSLEFGHLIDPLTSILLILITTVGILVLVYSDSYMSHDQGYLRFFVYMSFFNTSMLGLVTSSNLIQIYIFWELVGMCSYLLIGFWFTRPIVSNACQKAFVTNRVGDFGLLLGILGLYWITGSFEFQDLFEIFNNLIYNNDNEVHFLFVTLCAFLLFSGAIAKSAQFPLHVWLPDAMEGPTPISALIHAATMVAAGIFLVARLLPLFVVIPYIMKLIALIGIITVLLGATLAFAQKDIKRGLAYSTMSQLGYTMLALGMGSYRAALFHLITHAYSKALLFLGSGSIIHSMEGIVGYSPDKSQNMVLMGGLTKHVPITKIAFLLGTLSLCGIPPLACFWSKDEILNDSWSYSPIFAIIAFSTAGLTAFYMFRVYLLTFEGHLNIYFQNYSGKKNSAFYSISLWGKQGSKILKKKMRLLPLLTINNKNNNERASFFCFFWKKIYQTGGTVRKMTCPFITINHFGTKRIFSYPQESDNTILFPMLVLVLFTLFIGAIGIPFNQFNKEEMNLDILSKLLIPSLSLLHQNQNESVDWYEFVTNSTFSVSIASFGIFIASSLYKPIYSSLQNLKFLNLVAKKGPKRILWDKIINVIYDWSYNRGYIDVFYTISLTEGIRRLAELTSFFDRRVIDGITNGVGFTSFFAGEGIKYVGGGRISFYLLLYLFYVLIFLLISSSIFSSFSSL</sequence>